<reference key="1">
    <citation type="journal article" date="2009" name="PLoS Genet.">
        <title>Organised genome dynamics in the Escherichia coli species results in highly diverse adaptive paths.</title>
        <authorList>
            <person name="Touchon M."/>
            <person name="Hoede C."/>
            <person name="Tenaillon O."/>
            <person name="Barbe V."/>
            <person name="Baeriswyl S."/>
            <person name="Bidet P."/>
            <person name="Bingen E."/>
            <person name="Bonacorsi S."/>
            <person name="Bouchier C."/>
            <person name="Bouvet O."/>
            <person name="Calteau A."/>
            <person name="Chiapello H."/>
            <person name="Clermont O."/>
            <person name="Cruveiller S."/>
            <person name="Danchin A."/>
            <person name="Diard M."/>
            <person name="Dossat C."/>
            <person name="Karoui M.E."/>
            <person name="Frapy E."/>
            <person name="Garry L."/>
            <person name="Ghigo J.M."/>
            <person name="Gilles A.M."/>
            <person name="Johnson J."/>
            <person name="Le Bouguenec C."/>
            <person name="Lescat M."/>
            <person name="Mangenot S."/>
            <person name="Martinez-Jehanne V."/>
            <person name="Matic I."/>
            <person name="Nassif X."/>
            <person name="Oztas S."/>
            <person name="Petit M.A."/>
            <person name="Pichon C."/>
            <person name="Rouy Z."/>
            <person name="Ruf C.S."/>
            <person name="Schneider D."/>
            <person name="Tourret J."/>
            <person name="Vacherie B."/>
            <person name="Vallenet D."/>
            <person name="Medigue C."/>
            <person name="Rocha E.P.C."/>
            <person name="Denamur E."/>
        </authorList>
    </citation>
    <scope>NUCLEOTIDE SEQUENCE [LARGE SCALE GENOMIC DNA]</scope>
    <source>
        <strain>IAI1</strain>
    </source>
</reference>
<sequence length="428" mass="45436">MKTSLFKSLYFQVLTAIAIGILLGHFYPEIGEQMKPLGDGFVKLIKMIIAPVIFCTVVTGIAGMESMKAVGRTGAVALLYFEIVSTIALIIGLIIVNVVQPGAGMNVDPATLDAKAVAVYADQAKDQGIVAFIMDVIPASVIGAFASGNILQVLLFAVLFGFALHRLGSKGQLIFNVIESFSQVIFGIINMIMRLAPIGAFGAMAFTIGKYGVGTLVQLGQLIICFYITCILFVVLVLGSIAKATGFSIFKFIRYIREELLIVLGTSSSESALPRMLDKMEKLGCRKSVVGLVIPTGYSFNLDGTSIYLTMAAVFIAQATNSQMDIVHQITLLIVLLLSSKGAAGVTGSGFIVLAATLSAVGHLPVAGLALILGIDRFMSEARALTNLVGNGVATIVVAKWVKELDHKKLDDVLNNRAPDGKTHELSS</sequence>
<proteinExistence type="inferred from homology"/>
<evidence type="ECO:0000255" key="1">
    <source>
        <dbReference type="HAMAP-Rule" id="MF_01300"/>
    </source>
</evidence>
<gene>
    <name evidence="1" type="primary">dctA</name>
    <name type="ordered locus">ECIAI1_3679</name>
</gene>
<keyword id="KW-0997">Cell inner membrane</keyword>
<keyword id="KW-1003">Cell membrane</keyword>
<keyword id="KW-0472">Membrane</keyword>
<keyword id="KW-0769">Symport</keyword>
<keyword id="KW-0812">Transmembrane</keyword>
<keyword id="KW-1133">Transmembrane helix</keyword>
<keyword id="KW-0813">Transport</keyword>
<accession>B7M3E0</accession>
<comment type="function">
    <text evidence="1">Responsible for the transport of dicarboxylates such as succinate, fumarate, and malate from the periplasm across the membrane.</text>
</comment>
<comment type="subcellular location">
    <subcellularLocation>
        <location evidence="1">Cell inner membrane</location>
        <topology evidence="1">Multi-pass membrane protein</topology>
    </subcellularLocation>
</comment>
<comment type="similarity">
    <text evidence="1">Belongs to the dicarboxylate/amino acid:cation symporter (DAACS) (TC 2.A.23) family.</text>
</comment>
<feature type="chain" id="PRO_1000140453" description="C4-dicarboxylate transport protein">
    <location>
        <begin position="1"/>
        <end position="428"/>
    </location>
</feature>
<feature type="transmembrane region" description="Helical" evidence="1">
    <location>
        <begin position="8"/>
        <end position="28"/>
    </location>
</feature>
<feature type="transmembrane region" description="Helical" evidence="1">
    <location>
        <begin position="44"/>
        <end position="64"/>
    </location>
</feature>
<feature type="transmembrane region" description="Helical" evidence="1">
    <location>
        <begin position="76"/>
        <end position="96"/>
    </location>
</feature>
<feature type="transmembrane region" description="Helical" evidence="1">
    <location>
        <begin position="142"/>
        <end position="162"/>
    </location>
</feature>
<feature type="transmembrane region" description="Helical" evidence="1">
    <location>
        <begin position="184"/>
        <end position="204"/>
    </location>
</feature>
<feature type="transmembrane region" description="Helical" evidence="1">
    <location>
        <begin position="222"/>
        <end position="242"/>
    </location>
</feature>
<feature type="transmembrane region" description="Helical" evidence="1">
    <location>
        <begin position="326"/>
        <end position="346"/>
    </location>
</feature>
<feature type="transmembrane region" description="Helical" evidence="1">
    <location>
        <begin position="352"/>
        <end position="372"/>
    </location>
</feature>
<dbReference type="EMBL" id="CU928160">
    <property type="protein sequence ID" value="CAR00477.1"/>
    <property type="molecule type" value="Genomic_DNA"/>
</dbReference>
<dbReference type="RefSeq" id="WP_000858214.1">
    <property type="nucleotide sequence ID" value="NC_011741.1"/>
</dbReference>
<dbReference type="SMR" id="B7M3E0"/>
<dbReference type="GeneID" id="93778248"/>
<dbReference type="KEGG" id="ecr:ECIAI1_3679"/>
<dbReference type="HOGENOM" id="CLU_019375_7_0_6"/>
<dbReference type="GO" id="GO:0005886">
    <property type="term" value="C:plasma membrane"/>
    <property type="evidence" value="ECO:0007669"/>
    <property type="project" value="UniProtKB-SubCell"/>
</dbReference>
<dbReference type="GO" id="GO:0015138">
    <property type="term" value="F:fumarate transmembrane transporter activity"/>
    <property type="evidence" value="ECO:0007669"/>
    <property type="project" value="TreeGrafter"/>
</dbReference>
<dbReference type="GO" id="GO:0015366">
    <property type="term" value="F:malate:proton symporter activity"/>
    <property type="evidence" value="ECO:0007669"/>
    <property type="project" value="TreeGrafter"/>
</dbReference>
<dbReference type="GO" id="GO:0015141">
    <property type="term" value="F:succinate transmembrane transporter activity"/>
    <property type="evidence" value="ECO:0007669"/>
    <property type="project" value="TreeGrafter"/>
</dbReference>
<dbReference type="GO" id="GO:0070778">
    <property type="term" value="P:L-aspartate transmembrane transport"/>
    <property type="evidence" value="ECO:0007669"/>
    <property type="project" value="TreeGrafter"/>
</dbReference>
<dbReference type="FunFam" id="1.10.3860.10:FF:000001">
    <property type="entry name" value="C4-dicarboxylate transport protein"/>
    <property type="match status" value="1"/>
</dbReference>
<dbReference type="Gene3D" id="1.10.3860.10">
    <property type="entry name" value="Sodium:dicarboxylate symporter"/>
    <property type="match status" value="1"/>
</dbReference>
<dbReference type="HAMAP" id="MF_01300">
    <property type="entry name" value="C4_dicarb_transport"/>
    <property type="match status" value="1"/>
</dbReference>
<dbReference type="InterPro" id="IPR023954">
    <property type="entry name" value="C4_dicarb_transport"/>
</dbReference>
<dbReference type="InterPro" id="IPR001991">
    <property type="entry name" value="Na-dicarboxylate_symporter"/>
</dbReference>
<dbReference type="InterPro" id="IPR018107">
    <property type="entry name" value="Na-dicarboxylate_symporter_CS"/>
</dbReference>
<dbReference type="InterPro" id="IPR036458">
    <property type="entry name" value="Na:dicarbo_symporter_sf"/>
</dbReference>
<dbReference type="NCBIfam" id="NF002461">
    <property type="entry name" value="PRK01663.1"/>
    <property type="match status" value="1"/>
</dbReference>
<dbReference type="NCBIfam" id="NF009587">
    <property type="entry name" value="PRK13027.1"/>
    <property type="match status" value="1"/>
</dbReference>
<dbReference type="PANTHER" id="PTHR42865:SF1">
    <property type="entry name" value="AEROBIC C4-DICARBOXYLATE TRANSPORT PROTEIN"/>
    <property type="match status" value="1"/>
</dbReference>
<dbReference type="PANTHER" id="PTHR42865">
    <property type="entry name" value="PROTON/GLUTAMATE-ASPARTATE SYMPORTER"/>
    <property type="match status" value="1"/>
</dbReference>
<dbReference type="Pfam" id="PF00375">
    <property type="entry name" value="SDF"/>
    <property type="match status" value="1"/>
</dbReference>
<dbReference type="PRINTS" id="PR00173">
    <property type="entry name" value="EDTRNSPORT"/>
</dbReference>
<dbReference type="SUPFAM" id="SSF118215">
    <property type="entry name" value="Proton glutamate symport protein"/>
    <property type="match status" value="1"/>
</dbReference>
<dbReference type="PROSITE" id="PS00713">
    <property type="entry name" value="NA_DICARBOXYL_SYMP_1"/>
    <property type="match status" value="1"/>
</dbReference>
<dbReference type="PROSITE" id="PS00714">
    <property type="entry name" value="NA_DICARBOXYL_SYMP_2"/>
    <property type="match status" value="1"/>
</dbReference>
<protein>
    <recommendedName>
        <fullName evidence="1">C4-dicarboxylate transport protein</fullName>
    </recommendedName>
</protein>
<organism>
    <name type="scientific">Escherichia coli O8 (strain IAI1)</name>
    <dbReference type="NCBI Taxonomy" id="585034"/>
    <lineage>
        <taxon>Bacteria</taxon>
        <taxon>Pseudomonadati</taxon>
        <taxon>Pseudomonadota</taxon>
        <taxon>Gammaproteobacteria</taxon>
        <taxon>Enterobacterales</taxon>
        <taxon>Enterobacteriaceae</taxon>
        <taxon>Escherichia</taxon>
    </lineage>
</organism>
<name>DCTA_ECO8A</name>